<sequence length="30" mass="3073">EDDHDHHHHHHHHHHHHGVGGGGGGGGGGA</sequence>
<comment type="function">
    <text evidence="1">May serve as a metalloproteinase inhibitor during glandular storage. Their inhibition may be instantly disengaged, by dilution or physiochemical change, when venom is injected into tissue of the victim.</text>
</comment>
<comment type="subcellular location">
    <subcellularLocation>
        <location>Secreted</location>
    </subcellularLocation>
</comment>
<comment type="tissue specificity">
    <text>Expressed by the venom gland.</text>
</comment>
<comment type="mass spectrometry" mass="3071.39" method="Electrospray" evidence="3"/>
<comment type="similarity">
    <text evidence="4">Belongs to the pHpG family.</text>
</comment>
<keyword id="KW-0903">Direct protein sequencing</keyword>
<keyword id="KW-0481">Metalloenzyme inhibitor</keyword>
<keyword id="KW-0483">Metalloprotease inhibitor</keyword>
<keyword id="KW-0646">Protease inhibitor</keyword>
<keyword id="KW-0964">Secreted</keyword>
<protein>
    <recommendedName>
        <fullName>Poly-His-poly-Gly peptide 2</fullName>
        <shortName>pHpG 2</shortName>
    </recommendedName>
</protein>
<name>SVMI2_ATHNI</name>
<organism>
    <name type="scientific">Atheris nitschei</name>
    <name type="common">Great lakes bush viper</name>
    <dbReference type="NCBI Taxonomy" id="110224"/>
    <lineage>
        <taxon>Eukaryota</taxon>
        <taxon>Metazoa</taxon>
        <taxon>Chordata</taxon>
        <taxon>Craniata</taxon>
        <taxon>Vertebrata</taxon>
        <taxon>Euteleostomi</taxon>
        <taxon>Lepidosauria</taxon>
        <taxon>Squamata</taxon>
        <taxon>Bifurcata</taxon>
        <taxon>Unidentata</taxon>
        <taxon>Episquamata</taxon>
        <taxon>Toxicofera</taxon>
        <taxon>Serpentes</taxon>
        <taxon>Colubroidea</taxon>
        <taxon>Viperidae</taxon>
        <taxon>Viperinae</taxon>
        <taxon>Atheris</taxon>
    </lineage>
</organism>
<dbReference type="GO" id="GO:0005576">
    <property type="term" value="C:extracellular region"/>
    <property type="evidence" value="ECO:0007669"/>
    <property type="project" value="UniProtKB-SubCell"/>
</dbReference>
<dbReference type="GO" id="GO:0030414">
    <property type="term" value="F:peptidase inhibitor activity"/>
    <property type="evidence" value="ECO:0007669"/>
    <property type="project" value="UniProtKB-KW"/>
</dbReference>
<reference key="1">
    <citation type="journal article" date="2007" name="Rapid Commun. Mass Spectrom.">
        <title>The venom of the snake genus Atheris contains a new class of peptides with clusters of histidine and glycine residues.</title>
        <authorList>
            <person name="Favreau P."/>
            <person name="Cheneval O."/>
            <person name="Menin L."/>
            <person name="Michalet S."/>
            <person name="Gaertner H."/>
            <person name="Principaud F."/>
            <person name="Thai R."/>
            <person name="Menez A."/>
            <person name="Bulet P."/>
            <person name="Stoecklin R."/>
        </authorList>
    </citation>
    <scope>PROTEIN SEQUENCE</scope>
    <scope>MASS SPECTROMETRY</scope>
    <source>
        <tissue>Venom</tissue>
    </source>
</reference>
<feature type="peptide" id="PRO_0000335994" description="Poly-His-poly-Gly peptide 2">
    <location>
        <begin position="1"/>
        <end position="30"/>
    </location>
</feature>
<feature type="region of interest" description="Disordered" evidence="2">
    <location>
        <begin position="1"/>
        <end position="30"/>
    </location>
</feature>
<feature type="compositionally biased region" description="Basic residues" evidence="2">
    <location>
        <begin position="1"/>
        <end position="18"/>
    </location>
</feature>
<feature type="compositionally biased region" description="Gly residues" evidence="2">
    <location>
        <begin position="19"/>
        <end position="30"/>
    </location>
</feature>
<accession>P0C7K6</accession>
<evidence type="ECO:0000250" key="1">
    <source>
        <dbReference type="UniProtKB" id="A8YPR6"/>
    </source>
</evidence>
<evidence type="ECO:0000256" key="2">
    <source>
        <dbReference type="SAM" id="MobiDB-lite"/>
    </source>
</evidence>
<evidence type="ECO:0000269" key="3">
    <source>
    </source>
</evidence>
<evidence type="ECO:0000305" key="4"/>
<proteinExistence type="evidence at protein level"/>